<evidence type="ECO:0000255" key="1">
    <source>
        <dbReference type="HAMAP-Rule" id="MF_00021"/>
    </source>
</evidence>
<accession>Q97RE1</accession>
<sequence>MQYSEIMIRYGELSTKGKNRMRFINKLRNNISDVLSIYTQVKVTADRDRAHAYLNGADYTAVAESLKQVFGIQNFSPVYKVEKSVEVLKSSVQEIMRDIYKEGMTFKISSKRSDHNFELDSRELNQTLGGAVFEAIPNVQVQMKSPDINLQVEIREEAAYLSYETIRGAGGLPVGTSGKGMLMLSGGIDSPVAGYLALKRGVDIEAVHFASPPYTSPGALKKAQDLTRKLTKFGGNIQFIEVPFTEIQEEIKAKAPEAYLMTLTRRFMMRITDRIREVRNGLVIINGESLGQVASQTLESMKAINAVTNTPIIRPVVTMDKLEIIDIAQEIDTFDISIQPFEDCCTIFAPDRPKTNPKIKNAEQYEARMDVEGLVERAVAGIMITEITPQAEKDEVDDLIDNLL</sequence>
<organism>
    <name type="scientific">Streptococcus pneumoniae serotype 4 (strain ATCC BAA-334 / TIGR4)</name>
    <dbReference type="NCBI Taxonomy" id="170187"/>
    <lineage>
        <taxon>Bacteria</taxon>
        <taxon>Bacillati</taxon>
        <taxon>Bacillota</taxon>
        <taxon>Bacilli</taxon>
        <taxon>Lactobacillales</taxon>
        <taxon>Streptococcaceae</taxon>
        <taxon>Streptococcus</taxon>
    </lineage>
</organism>
<name>THII_STRPN</name>
<reference key="1">
    <citation type="journal article" date="2001" name="Science">
        <title>Complete genome sequence of a virulent isolate of Streptococcus pneumoniae.</title>
        <authorList>
            <person name="Tettelin H."/>
            <person name="Nelson K.E."/>
            <person name="Paulsen I.T."/>
            <person name="Eisen J.A."/>
            <person name="Read T.D."/>
            <person name="Peterson S.N."/>
            <person name="Heidelberg J.F."/>
            <person name="DeBoy R.T."/>
            <person name="Haft D.H."/>
            <person name="Dodson R.J."/>
            <person name="Durkin A.S."/>
            <person name="Gwinn M.L."/>
            <person name="Kolonay J.F."/>
            <person name="Nelson W.C."/>
            <person name="Peterson J.D."/>
            <person name="Umayam L.A."/>
            <person name="White O."/>
            <person name="Salzberg S.L."/>
            <person name="Lewis M.R."/>
            <person name="Radune D."/>
            <person name="Holtzapple E.K."/>
            <person name="Khouri H.M."/>
            <person name="Wolf A.M."/>
            <person name="Utterback T.R."/>
            <person name="Hansen C.L."/>
            <person name="McDonald L.A."/>
            <person name="Feldblyum T.V."/>
            <person name="Angiuoli S.V."/>
            <person name="Dickinson T."/>
            <person name="Hickey E.K."/>
            <person name="Holt I.E."/>
            <person name="Loftus B.J."/>
            <person name="Yang F."/>
            <person name="Smith H.O."/>
            <person name="Venter J.C."/>
            <person name="Dougherty B.A."/>
            <person name="Morrison D.A."/>
            <person name="Hollingshead S.K."/>
            <person name="Fraser C.M."/>
        </authorList>
    </citation>
    <scope>NUCLEOTIDE SEQUENCE [LARGE SCALE GENOMIC DNA]</scope>
    <source>
        <strain>ATCC BAA-334 / TIGR4</strain>
    </source>
</reference>
<proteinExistence type="inferred from homology"/>
<feature type="chain" id="PRO_0000154874" description="Probable tRNA sulfurtransferase">
    <location>
        <begin position="1"/>
        <end position="404"/>
    </location>
</feature>
<feature type="domain" description="THUMP" evidence="1">
    <location>
        <begin position="60"/>
        <end position="165"/>
    </location>
</feature>
<feature type="binding site" evidence="1">
    <location>
        <begin position="183"/>
        <end position="184"/>
    </location>
    <ligand>
        <name>ATP</name>
        <dbReference type="ChEBI" id="CHEBI:30616"/>
    </ligand>
</feature>
<feature type="binding site" evidence="1">
    <location>
        <begin position="208"/>
        <end position="209"/>
    </location>
    <ligand>
        <name>ATP</name>
        <dbReference type="ChEBI" id="CHEBI:30616"/>
    </ligand>
</feature>
<feature type="binding site" evidence="1">
    <location>
        <position position="265"/>
    </location>
    <ligand>
        <name>ATP</name>
        <dbReference type="ChEBI" id="CHEBI:30616"/>
    </ligand>
</feature>
<feature type="binding site" evidence="1">
    <location>
        <position position="287"/>
    </location>
    <ligand>
        <name>ATP</name>
        <dbReference type="ChEBI" id="CHEBI:30616"/>
    </ligand>
</feature>
<feature type="binding site" evidence="1">
    <location>
        <position position="296"/>
    </location>
    <ligand>
        <name>ATP</name>
        <dbReference type="ChEBI" id="CHEBI:30616"/>
    </ligand>
</feature>
<protein>
    <recommendedName>
        <fullName evidence="1">Probable tRNA sulfurtransferase</fullName>
        <ecNumber evidence="1">2.8.1.4</ecNumber>
    </recommendedName>
    <alternativeName>
        <fullName evidence="1">Sulfur carrier protein ThiS sulfurtransferase</fullName>
    </alternativeName>
    <alternativeName>
        <fullName evidence="1">Thiamine biosynthesis protein ThiI</fullName>
    </alternativeName>
    <alternativeName>
        <fullName evidence="1">tRNA 4-thiouridine synthase</fullName>
    </alternativeName>
</protein>
<keyword id="KW-0067">ATP-binding</keyword>
<keyword id="KW-0963">Cytoplasm</keyword>
<keyword id="KW-0547">Nucleotide-binding</keyword>
<keyword id="KW-1185">Reference proteome</keyword>
<keyword id="KW-0694">RNA-binding</keyword>
<keyword id="KW-0784">Thiamine biosynthesis</keyword>
<keyword id="KW-0808">Transferase</keyword>
<keyword id="KW-0820">tRNA-binding</keyword>
<dbReference type="EC" id="2.8.1.4" evidence="1"/>
<dbReference type="EMBL" id="AE005672">
    <property type="protein sequence ID" value="AAK75008.1"/>
    <property type="molecule type" value="Genomic_DNA"/>
</dbReference>
<dbReference type="PIR" id="G95101">
    <property type="entry name" value="G95101"/>
</dbReference>
<dbReference type="RefSeq" id="WP_001200084.1">
    <property type="nucleotide sequence ID" value="NZ_CP155539.1"/>
</dbReference>
<dbReference type="SMR" id="Q97RE1"/>
<dbReference type="PaxDb" id="170187-SP_0881"/>
<dbReference type="EnsemblBacteria" id="AAK75008">
    <property type="protein sequence ID" value="AAK75008"/>
    <property type="gene ID" value="SP_0881"/>
</dbReference>
<dbReference type="GeneID" id="45653763"/>
<dbReference type="KEGG" id="spn:SP_0881"/>
<dbReference type="eggNOG" id="COG0301">
    <property type="taxonomic scope" value="Bacteria"/>
</dbReference>
<dbReference type="PhylomeDB" id="Q97RE1"/>
<dbReference type="BioCyc" id="SPNE170187:G1FZB-903-MONOMER"/>
<dbReference type="UniPathway" id="UPA00060"/>
<dbReference type="Proteomes" id="UP000000585">
    <property type="component" value="Chromosome"/>
</dbReference>
<dbReference type="GO" id="GO:0005829">
    <property type="term" value="C:cytosol"/>
    <property type="evidence" value="ECO:0007669"/>
    <property type="project" value="TreeGrafter"/>
</dbReference>
<dbReference type="GO" id="GO:0005524">
    <property type="term" value="F:ATP binding"/>
    <property type="evidence" value="ECO:0007669"/>
    <property type="project" value="UniProtKB-UniRule"/>
</dbReference>
<dbReference type="GO" id="GO:0004810">
    <property type="term" value="F:CCA tRNA nucleotidyltransferase activity"/>
    <property type="evidence" value="ECO:0007669"/>
    <property type="project" value="InterPro"/>
</dbReference>
<dbReference type="GO" id="GO:0000049">
    <property type="term" value="F:tRNA binding"/>
    <property type="evidence" value="ECO:0007669"/>
    <property type="project" value="UniProtKB-UniRule"/>
</dbReference>
<dbReference type="GO" id="GO:0140741">
    <property type="term" value="F:tRNA-uracil-4 sulfurtransferase activity"/>
    <property type="evidence" value="ECO:0007669"/>
    <property type="project" value="UniProtKB-EC"/>
</dbReference>
<dbReference type="GO" id="GO:0009228">
    <property type="term" value="P:thiamine biosynthetic process"/>
    <property type="evidence" value="ECO:0007669"/>
    <property type="project" value="UniProtKB-KW"/>
</dbReference>
<dbReference type="GO" id="GO:0009229">
    <property type="term" value="P:thiamine diphosphate biosynthetic process"/>
    <property type="evidence" value="ECO:0007669"/>
    <property type="project" value="UniProtKB-UniRule"/>
</dbReference>
<dbReference type="GO" id="GO:0052837">
    <property type="term" value="P:thiazole biosynthetic process"/>
    <property type="evidence" value="ECO:0007669"/>
    <property type="project" value="TreeGrafter"/>
</dbReference>
<dbReference type="GO" id="GO:0002937">
    <property type="term" value="P:tRNA 4-thiouridine biosynthesis"/>
    <property type="evidence" value="ECO:0007669"/>
    <property type="project" value="TreeGrafter"/>
</dbReference>
<dbReference type="CDD" id="cd01712">
    <property type="entry name" value="PPase_ThiI"/>
    <property type="match status" value="1"/>
</dbReference>
<dbReference type="CDD" id="cd11716">
    <property type="entry name" value="THUMP_ThiI"/>
    <property type="match status" value="1"/>
</dbReference>
<dbReference type="FunFam" id="3.30.2130.30:FF:000006">
    <property type="entry name" value="Probable tRNA sulfurtransferase"/>
    <property type="match status" value="1"/>
</dbReference>
<dbReference type="FunFam" id="3.40.50.620:FF:000053">
    <property type="entry name" value="Probable tRNA sulfurtransferase"/>
    <property type="match status" value="1"/>
</dbReference>
<dbReference type="Gene3D" id="3.30.2130.30">
    <property type="match status" value="1"/>
</dbReference>
<dbReference type="Gene3D" id="3.40.50.620">
    <property type="entry name" value="HUPs"/>
    <property type="match status" value="1"/>
</dbReference>
<dbReference type="HAMAP" id="MF_00021">
    <property type="entry name" value="ThiI"/>
    <property type="match status" value="1"/>
</dbReference>
<dbReference type="InterPro" id="IPR014729">
    <property type="entry name" value="Rossmann-like_a/b/a_fold"/>
</dbReference>
<dbReference type="InterPro" id="IPR020536">
    <property type="entry name" value="ThiI_AANH"/>
</dbReference>
<dbReference type="InterPro" id="IPR054173">
    <property type="entry name" value="ThiI_fer"/>
</dbReference>
<dbReference type="InterPro" id="IPR049961">
    <property type="entry name" value="ThiI_N"/>
</dbReference>
<dbReference type="InterPro" id="IPR004114">
    <property type="entry name" value="THUMP_dom"/>
</dbReference>
<dbReference type="InterPro" id="IPR049962">
    <property type="entry name" value="THUMP_ThiI"/>
</dbReference>
<dbReference type="InterPro" id="IPR003720">
    <property type="entry name" value="tRNA_STrfase"/>
</dbReference>
<dbReference type="InterPro" id="IPR050102">
    <property type="entry name" value="tRNA_sulfurtransferase_ThiI"/>
</dbReference>
<dbReference type="NCBIfam" id="TIGR00342">
    <property type="entry name" value="tRNA uracil 4-sulfurtransferase ThiI"/>
    <property type="match status" value="1"/>
</dbReference>
<dbReference type="PANTHER" id="PTHR43209">
    <property type="entry name" value="TRNA SULFURTRANSFERASE"/>
    <property type="match status" value="1"/>
</dbReference>
<dbReference type="PANTHER" id="PTHR43209:SF1">
    <property type="entry name" value="TRNA SULFURTRANSFERASE"/>
    <property type="match status" value="1"/>
</dbReference>
<dbReference type="Pfam" id="PF02568">
    <property type="entry name" value="ThiI"/>
    <property type="match status" value="1"/>
</dbReference>
<dbReference type="Pfam" id="PF22025">
    <property type="entry name" value="ThiI_fer"/>
    <property type="match status" value="1"/>
</dbReference>
<dbReference type="Pfam" id="PF02926">
    <property type="entry name" value="THUMP"/>
    <property type="match status" value="1"/>
</dbReference>
<dbReference type="SMART" id="SM00981">
    <property type="entry name" value="THUMP"/>
    <property type="match status" value="1"/>
</dbReference>
<dbReference type="SUPFAM" id="SSF52402">
    <property type="entry name" value="Adenine nucleotide alpha hydrolases-like"/>
    <property type="match status" value="1"/>
</dbReference>
<dbReference type="SUPFAM" id="SSF143437">
    <property type="entry name" value="THUMP domain-like"/>
    <property type="match status" value="1"/>
</dbReference>
<dbReference type="PROSITE" id="PS51165">
    <property type="entry name" value="THUMP"/>
    <property type="match status" value="1"/>
</dbReference>
<gene>
    <name evidence="1" type="primary">thiI</name>
    <name type="ordered locus">SP_0881</name>
</gene>
<comment type="function">
    <text evidence="1">Catalyzes the ATP-dependent transfer of a sulfur to tRNA to produce 4-thiouridine in position 8 of tRNAs, which functions as a near-UV photosensor. Also catalyzes the transfer of sulfur to the sulfur carrier protein ThiS, forming ThiS-thiocarboxylate. This is a step in the synthesis of thiazole, in the thiamine biosynthesis pathway. The sulfur is donated as persulfide by IscS.</text>
</comment>
<comment type="catalytic activity">
    <reaction evidence="1">
        <text>[ThiI sulfur-carrier protein]-S-sulfanyl-L-cysteine + a uridine in tRNA + 2 reduced [2Fe-2S]-[ferredoxin] + ATP + H(+) = [ThiI sulfur-carrier protein]-L-cysteine + a 4-thiouridine in tRNA + 2 oxidized [2Fe-2S]-[ferredoxin] + AMP + diphosphate</text>
        <dbReference type="Rhea" id="RHEA:24176"/>
        <dbReference type="Rhea" id="RHEA-COMP:10000"/>
        <dbReference type="Rhea" id="RHEA-COMP:10001"/>
        <dbReference type="Rhea" id="RHEA-COMP:13337"/>
        <dbReference type="Rhea" id="RHEA-COMP:13338"/>
        <dbReference type="Rhea" id="RHEA-COMP:13339"/>
        <dbReference type="Rhea" id="RHEA-COMP:13340"/>
        <dbReference type="ChEBI" id="CHEBI:15378"/>
        <dbReference type="ChEBI" id="CHEBI:29950"/>
        <dbReference type="ChEBI" id="CHEBI:30616"/>
        <dbReference type="ChEBI" id="CHEBI:33019"/>
        <dbReference type="ChEBI" id="CHEBI:33737"/>
        <dbReference type="ChEBI" id="CHEBI:33738"/>
        <dbReference type="ChEBI" id="CHEBI:61963"/>
        <dbReference type="ChEBI" id="CHEBI:65315"/>
        <dbReference type="ChEBI" id="CHEBI:136798"/>
        <dbReference type="ChEBI" id="CHEBI:456215"/>
        <dbReference type="EC" id="2.8.1.4"/>
    </reaction>
</comment>
<comment type="catalytic activity">
    <reaction evidence="1">
        <text>[ThiS sulfur-carrier protein]-C-terminal Gly-Gly-AMP + S-sulfanyl-L-cysteinyl-[cysteine desulfurase] + AH2 = [ThiS sulfur-carrier protein]-C-terminal-Gly-aminoethanethioate + L-cysteinyl-[cysteine desulfurase] + A + AMP + 2 H(+)</text>
        <dbReference type="Rhea" id="RHEA:43340"/>
        <dbReference type="Rhea" id="RHEA-COMP:12157"/>
        <dbReference type="Rhea" id="RHEA-COMP:12158"/>
        <dbReference type="Rhea" id="RHEA-COMP:12910"/>
        <dbReference type="Rhea" id="RHEA-COMP:19908"/>
        <dbReference type="ChEBI" id="CHEBI:13193"/>
        <dbReference type="ChEBI" id="CHEBI:15378"/>
        <dbReference type="ChEBI" id="CHEBI:17499"/>
        <dbReference type="ChEBI" id="CHEBI:29950"/>
        <dbReference type="ChEBI" id="CHEBI:61963"/>
        <dbReference type="ChEBI" id="CHEBI:90618"/>
        <dbReference type="ChEBI" id="CHEBI:232372"/>
        <dbReference type="ChEBI" id="CHEBI:456215"/>
    </reaction>
</comment>
<comment type="pathway">
    <text evidence="1">Cofactor biosynthesis; thiamine diphosphate biosynthesis.</text>
</comment>
<comment type="subcellular location">
    <subcellularLocation>
        <location evidence="1">Cytoplasm</location>
    </subcellularLocation>
</comment>
<comment type="similarity">
    <text evidence="1">Belongs to the ThiI family.</text>
</comment>